<proteinExistence type="inferred from homology"/>
<sequence length="136" mass="15274">MRHAYRGRRFNRTAEHRKAMFANMSAALIKHEQIITTLPKAKDLRPVVEKLITLGRIDSVHTRRLAMAQLRDADMVKKLFTVLGPRYKGRPGGYCRIMKAGFRQGDNAPLAVIEFVDRDVDARGKDSGPSQVADAA</sequence>
<gene>
    <name evidence="1" type="primary">rplQ</name>
    <name type="ordered locus">Mrad2831_2190</name>
</gene>
<dbReference type="EMBL" id="CP001001">
    <property type="protein sequence ID" value="ACB24185.1"/>
    <property type="molecule type" value="Genomic_DNA"/>
</dbReference>
<dbReference type="RefSeq" id="WP_012319164.1">
    <property type="nucleotide sequence ID" value="NC_010505.1"/>
</dbReference>
<dbReference type="SMR" id="B1LWP8"/>
<dbReference type="STRING" id="426355.Mrad2831_2190"/>
<dbReference type="GeneID" id="6138222"/>
<dbReference type="KEGG" id="mrd:Mrad2831_2190"/>
<dbReference type="eggNOG" id="COG0203">
    <property type="taxonomic scope" value="Bacteria"/>
</dbReference>
<dbReference type="HOGENOM" id="CLU_074407_2_0_5"/>
<dbReference type="OrthoDB" id="9809073at2"/>
<dbReference type="Proteomes" id="UP000006589">
    <property type="component" value="Chromosome"/>
</dbReference>
<dbReference type="GO" id="GO:0022625">
    <property type="term" value="C:cytosolic large ribosomal subunit"/>
    <property type="evidence" value="ECO:0007669"/>
    <property type="project" value="TreeGrafter"/>
</dbReference>
<dbReference type="GO" id="GO:0003735">
    <property type="term" value="F:structural constituent of ribosome"/>
    <property type="evidence" value="ECO:0007669"/>
    <property type="project" value="InterPro"/>
</dbReference>
<dbReference type="GO" id="GO:0006412">
    <property type="term" value="P:translation"/>
    <property type="evidence" value="ECO:0007669"/>
    <property type="project" value="UniProtKB-UniRule"/>
</dbReference>
<dbReference type="FunFam" id="3.90.1030.10:FF:000001">
    <property type="entry name" value="50S ribosomal protein L17"/>
    <property type="match status" value="1"/>
</dbReference>
<dbReference type="Gene3D" id="3.90.1030.10">
    <property type="entry name" value="Ribosomal protein L17"/>
    <property type="match status" value="1"/>
</dbReference>
<dbReference type="HAMAP" id="MF_01368">
    <property type="entry name" value="Ribosomal_bL17"/>
    <property type="match status" value="1"/>
</dbReference>
<dbReference type="InterPro" id="IPR000456">
    <property type="entry name" value="Ribosomal_bL17"/>
</dbReference>
<dbReference type="InterPro" id="IPR047859">
    <property type="entry name" value="Ribosomal_bL17_CS"/>
</dbReference>
<dbReference type="InterPro" id="IPR036373">
    <property type="entry name" value="Ribosomal_bL17_sf"/>
</dbReference>
<dbReference type="NCBIfam" id="TIGR00059">
    <property type="entry name" value="L17"/>
    <property type="match status" value="1"/>
</dbReference>
<dbReference type="PANTHER" id="PTHR14413:SF16">
    <property type="entry name" value="LARGE RIBOSOMAL SUBUNIT PROTEIN BL17M"/>
    <property type="match status" value="1"/>
</dbReference>
<dbReference type="PANTHER" id="PTHR14413">
    <property type="entry name" value="RIBOSOMAL PROTEIN L17"/>
    <property type="match status" value="1"/>
</dbReference>
<dbReference type="Pfam" id="PF01196">
    <property type="entry name" value="Ribosomal_L17"/>
    <property type="match status" value="1"/>
</dbReference>
<dbReference type="SUPFAM" id="SSF64263">
    <property type="entry name" value="Prokaryotic ribosomal protein L17"/>
    <property type="match status" value="1"/>
</dbReference>
<dbReference type="PROSITE" id="PS01167">
    <property type="entry name" value="RIBOSOMAL_L17"/>
    <property type="match status" value="1"/>
</dbReference>
<reference key="1">
    <citation type="submission" date="2008-03" db="EMBL/GenBank/DDBJ databases">
        <title>Complete sequence of chromosome of Methylobacterium radiotolerans JCM 2831.</title>
        <authorList>
            <consortium name="US DOE Joint Genome Institute"/>
            <person name="Copeland A."/>
            <person name="Lucas S."/>
            <person name="Lapidus A."/>
            <person name="Glavina del Rio T."/>
            <person name="Dalin E."/>
            <person name="Tice H."/>
            <person name="Bruce D."/>
            <person name="Goodwin L."/>
            <person name="Pitluck S."/>
            <person name="Kiss H."/>
            <person name="Brettin T."/>
            <person name="Detter J.C."/>
            <person name="Han C."/>
            <person name="Kuske C.R."/>
            <person name="Schmutz J."/>
            <person name="Larimer F."/>
            <person name="Land M."/>
            <person name="Hauser L."/>
            <person name="Kyrpides N."/>
            <person name="Mikhailova N."/>
            <person name="Marx C.J."/>
            <person name="Richardson P."/>
        </authorList>
    </citation>
    <scope>NUCLEOTIDE SEQUENCE [LARGE SCALE GENOMIC DNA]</scope>
    <source>
        <strain>ATCC 27329 / DSM 1819 / JCM 2831 / NBRC 15690 / NCIMB 10815 / 0-1</strain>
    </source>
</reference>
<accession>B1LWP8</accession>
<evidence type="ECO:0000255" key="1">
    <source>
        <dbReference type="HAMAP-Rule" id="MF_01368"/>
    </source>
</evidence>
<evidence type="ECO:0000305" key="2"/>
<comment type="subunit">
    <text evidence="1">Part of the 50S ribosomal subunit. Contacts protein L32.</text>
</comment>
<comment type="similarity">
    <text evidence="1">Belongs to the bacterial ribosomal protein bL17 family.</text>
</comment>
<protein>
    <recommendedName>
        <fullName evidence="1">Large ribosomal subunit protein bL17</fullName>
    </recommendedName>
    <alternativeName>
        <fullName evidence="2">50S ribosomal protein L17</fullName>
    </alternativeName>
</protein>
<organism>
    <name type="scientific">Methylobacterium radiotolerans (strain ATCC 27329 / DSM 1819 / JCM 2831 / NBRC 15690 / NCIMB 10815 / 0-1)</name>
    <dbReference type="NCBI Taxonomy" id="426355"/>
    <lineage>
        <taxon>Bacteria</taxon>
        <taxon>Pseudomonadati</taxon>
        <taxon>Pseudomonadota</taxon>
        <taxon>Alphaproteobacteria</taxon>
        <taxon>Hyphomicrobiales</taxon>
        <taxon>Methylobacteriaceae</taxon>
        <taxon>Methylobacterium</taxon>
    </lineage>
</organism>
<name>RL17_METRJ</name>
<feature type="chain" id="PRO_1000144449" description="Large ribosomal subunit protein bL17">
    <location>
        <begin position="1"/>
        <end position="136"/>
    </location>
</feature>
<keyword id="KW-0687">Ribonucleoprotein</keyword>
<keyword id="KW-0689">Ribosomal protein</keyword>